<organism>
    <name type="scientific">Shewanella frigidimarina (strain NCIMB 400)</name>
    <dbReference type="NCBI Taxonomy" id="318167"/>
    <lineage>
        <taxon>Bacteria</taxon>
        <taxon>Pseudomonadati</taxon>
        <taxon>Pseudomonadota</taxon>
        <taxon>Gammaproteobacteria</taxon>
        <taxon>Alteromonadales</taxon>
        <taxon>Shewanellaceae</taxon>
        <taxon>Shewanella</taxon>
    </lineage>
</organism>
<feature type="chain" id="PRO_1000001053" description="Dihydroxy-acid dehydratase">
    <location>
        <begin position="1"/>
        <end position="619"/>
    </location>
</feature>
<feature type="active site" description="Proton acceptor" evidence="1">
    <location>
        <position position="520"/>
    </location>
</feature>
<feature type="binding site" evidence="1">
    <location>
        <position position="81"/>
    </location>
    <ligand>
        <name>Mg(2+)</name>
        <dbReference type="ChEBI" id="CHEBI:18420"/>
    </ligand>
</feature>
<feature type="binding site" evidence="1">
    <location>
        <position position="122"/>
    </location>
    <ligand>
        <name>[2Fe-2S] cluster</name>
        <dbReference type="ChEBI" id="CHEBI:190135"/>
    </ligand>
</feature>
<feature type="binding site" evidence="1">
    <location>
        <position position="123"/>
    </location>
    <ligand>
        <name>Mg(2+)</name>
        <dbReference type="ChEBI" id="CHEBI:18420"/>
    </ligand>
</feature>
<feature type="binding site" description="via carbamate group" evidence="1">
    <location>
        <position position="124"/>
    </location>
    <ligand>
        <name>Mg(2+)</name>
        <dbReference type="ChEBI" id="CHEBI:18420"/>
    </ligand>
</feature>
<feature type="binding site" evidence="1">
    <location>
        <position position="195"/>
    </location>
    <ligand>
        <name>[2Fe-2S] cluster</name>
        <dbReference type="ChEBI" id="CHEBI:190135"/>
    </ligand>
</feature>
<feature type="binding site" evidence="1">
    <location>
        <position position="494"/>
    </location>
    <ligand>
        <name>Mg(2+)</name>
        <dbReference type="ChEBI" id="CHEBI:18420"/>
    </ligand>
</feature>
<feature type="modified residue" description="N6-carboxylysine" evidence="1">
    <location>
        <position position="124"/>
    </location>
</feature>
<protein>
    <recommendedName>
        <fullName evidence="1">Dihydroxy-acid dehydratase</fullName>
        <shortName evidence="1">DAD</shortName>
        <ecNumber evidence="1">4.2.1.9</ecNumber>
    </recommendedName>
</protein>
<accession>Q088M9</accession>
<name>ILVD_SHEFN</name>
<reference key="1">
    <citation type="submission" date="2006-08" db="EMBL/GenBank/DDBJ databases">
        <title>Complete sequence of Shewanella frigidimarina NCIMB 400.</title>
        <authorList>
            <consortium name="US DOE Joint Genome Institute"/>
            <person name="Copeland A."/>
            <person name="Lucas S."/>
            <person name="Lapidus A."/>
            <person name="Barry K."/>
            <person name="Detter J.C."/>
            <person name="Glavina del Rio T."/>
            <person name="Hammon N."/>
            <person name="Israni S."/>
            <person name="Dalin E."/>
            <person name="Tice H."/>
            <person name="Pitluck S."/>
            <person name="Fredrickson J.K."/>
            <person name="Kolker E."/>
            <person name="McCuel L.A."/>
            <person name="DiChristina T."/>
            <person name="Nealson K.H."/>
            <person name="Newman D."/>
            <person name="Tiedje J.M."/>
            <person name="Zhou J."/>
            <person name="Romine M.F."/>
            <person name="Culley D.E."/>
            <person name="Serres M."/>
            <person name="Chertkov O."/>
            <person name="Brettin T."/>
            <person name="Bruce D."/>
            <person name="Han C."/>
            <person name="Tapia R."/>
            <person name="Gilna P."/>
            <person name="Schmutz J."/>
            <person name="Larimer F."/>
            <person name="Land M."/>
            <person name="Hauser L."/>
            <person name="Kyrpides N."/>
            <person name="Mikhailova N."/>
            <person name="Richardson P."/>
        </authorList>
    </citation>
    <scope>NUCLEOTIDE SEQUENCE [LARGE SCALE GENOMIC DNA]</scope>
    <source>
        <strain>NCIMB 400</strain>
    </source>
</reference>
<comment type="function">
    <text evidence="1">Functions in the biosynthesis of branched-chain amino acids. Catalyzes the dehydration of (2R,3R)-2,3-dihydroxy-3-methylpentanoate (2,3-dihydroxy-3-methylvalerate) into 2-oxo-3-methylpentanoate (2-oxo-3-methylvalerate) and of (2R)-2,3-dihydroxy-3-methylbutanoate (2,3-dihydroxyisovalerate) into 2-oxo-3-methylbutanoate (2-oxoisovalerate), the penultimate precursor to L-isoleucine and L-valine, respectively.</text>
</comment>
<comment type="catalytic activity">
    <reaction evidence="1">
        <text>(2R)-2,3-dihydroxy-3-methylbutanoate = 3-methyl-2-oxobutanoate + H2O</text>
        <dbReference type="Rhea" id="RHEA:24809"/>
        <dbReference type="ChEBI" id="CHEBI:11851"/>
        <dbReference type="ChEBI" id="CHEBI:15377"/>
        <dbReference type="ChEBI" id="CHEBI:49072"/>
        <dbReference type="EC" id="4.2.1.9"/>
    </reaction>
    <physiologicalReaction direction="left-to-right" evidence="1">
        <dbReference type="Rhea" id="RHEA:24810"/>
    </physiologicalReaction>
</comment>
<comment type="catalytic activity">
    <reaction evidence="1">
        <text>(2R,3R)-2,3-dihydroxy-3-methylpentanoate = (S)-3-methyl-2-oxopentanoate + H2O</text>
        <dbReference type="Rhea" id="RHEA:27694"/>
        <dbReference type="ChEBI" id="CHEBI:15377"/>
        <dbReference type="ChEBI" id="CHEBI:35146"/>
        <dbReference type="ChEBI" id="CHEBI:49258"/>
        <dbReference type="EC" id="4.2.1.9"/>
    </reaction>
    <physiologicalReaction direction="left-to-right" evidence="1">
        <dbReference type="Rhea" id="RHEA:27695"/>
    </physiologicalReaction>
</comment>
<comment type="cofactor">
    <cofactor evidence="1">
        <name>[2Fe-2S] cluster</name>
        <dbReference type="ChEBI" id="CHEBI:190135"/>
    </cofactor>
    <text evidence="1">Binds 1 [2Fe-2S] cluster per subunit. This cluster acts as a Lewis acid cofactor.</text>
</comment>
<comment type="cofactor">
    <cofactor evidence="1">
        <name>Mg(2+)</name>
        <dbReference type="ChEBI" id="CHEBI:18420"/>
    </cofactor>
</comment>
<comment type="pathway">
    <text evidence="1">Amino-acid biosynthesis; L-isoleucine biosynthesis; L-isoleucine from 2-oxobutanoate: step 3/4.</text>
</comment>
<comment type="pathway">
    <text evidence="1">Amino-acid biosynthesis; L-valine biosynthesis; L-valine from pyruvate: step 3/4.</text>
</comment>
<comment type="subunit">
    <text evidence="1">Homodimer.</text>
</comment>
<comment type="similarity">
    <text evidence="1">Belongs to the IlvD/Edd family.</text>
</comment>
<gene>
    <name evidence="1" type="primary">ilvD</name>
    <name type="ordered locus">Sfri_0424</name>
</gene>
<evidence type="ECO:0000255" key="1">
    <source>
        <dbReference type="HAMAP-Rule" id="MF_00012"/>
    </source>
</evidence>
<sequence>MPKLRSATSTEGRNMAGARALWRATGVKENDFGKPIIAIANSFTQFVPGHVHLKNMGSLVAGAIEEAGGIAKEFNTIAVDDGIAMGHGGMLYSLPSRELIADSVEYMVNAHCADALVCISNCDKITPGMLMAALRLNIPVVFVSGGPMEAGKTKLSDQIIKLDLVDAMIAGADSNVSDEDSKQIERSACPTCGSCSGMFTANSMNCLTEALGLSLPGNGSMLATHEDRRELFLEAGRRVMMLAERYYKHDDETALPRNIASFKSFENAMVLDVAMGGSSNTVLHLVAAAQEAEIDFTMADIDRISRLVPHLCKVAPSTPKYHMEDVHRAGGVMGILGELDRAGLIHNDVPHVAADNGGDLKSVLAKYDIKQTNDPDVIRFFSAGPAGIPTTKAFSQNCRWDSVDDDRENGCIRSREFAFSQEGGLAVLSGNVAVDGCIVKTAGVDESNLTFVGSARVYESQDDAVAGILGGEVVEGDVVVIRYEGPKGGPGMQEMLYPTTYLKSRGLGAKCALITDGRFSGGTSGLSIGHVSPEAASGGTIALIENGDQIAIDIPKRSIQLNVSEAELTQRRTAMDAKGPLGWKPVSRERYVSLALKAYALLATSADKGAVRDRTKLEG</sequence>
<dbReference type="EC" id="4.2.1.9" evidence="1"/>
<dbReference type="EMBL" id="CP000447">
    <property type="protein sequence ID" value="ABI70286.1"/>
    <property type="molecule type" value="Genomic_DNA"/>
</dbReference>
<dbReference type="RefSeq" id="WP_011635913.1">
    <property type="nucleotide sequence ID" value="NC_008345.1"/>
</dbReference>
<dbReference type="SMR" id="Q088M9"/>
<dbReference type="STRING" id="318167.Sfri_0424"/>
<dbReference type="KEGG" id="sfr:Sfri_0424"/>
<dbReference type="eggNOG" id="COG0129">
    <property type="taxonomic scope" value="Bacteria"/>
</dbReference>
<dbReference type="HOGENOM" id="CLU_014271_4_2_6"/>
<dbReference type="OrthoDB" id="9807077at2"/>
<dbReference type="UniPathway" id="UPA00047">
    <property type="reaction ID" value="UER00057"/>
</dbReference>
<dbReference type="UniPathway" id="UPA00049">
    <property type="reaction ID" value="UER00061"/>
</dbReference>
<dbReference type="Proteomes" id="UP000000684">
    <property type="component" value="Chromosome"/>
</dbReference>
<dbReference type="GO" id="GO:0005829">
    <property type="term" value="C:cytosol"/>
    <property type="evidence" value="ECO:0007669"/>
    <property type="project" value="TreeGrafter"/>
</dbReference>
<dbReference type="GO" id="GO:0051537">
    <property type="term" value="F:2 iron, 2 sulfur cluster binding"/>
    <property type="evidence" value="ECO:0007669"/>
    <property type="project" value="UniProtKB-UniRule"/>
</dbReference>
<dbReference type="GO" id="GO:0004160">
    <property type="term" value="F:dihydroxy-acid dehydratase activity"/>
    <property type="evidence" value="ECO:0007669"/>
    <property type="project" value="UniProtKB-UniRule"/>
</dbReference>
<dbReference type="GO" id="GO:0000287">
    <property type="term" value="F:magnesium ion binding"/>
    <property type="evidence" value="ECO:0007669"/>
    <property type="project" value="UniProtKB-UniRule"/>
</dbReference>
<dbReference type="GO" id="GO:0009097">
    <property type="term" value="P:isoleucine biosynthetic process"/>
    <property type="evidence" value="ECO:0007669"/>
    <property type="project" value="UniProtKB-UniRule"/>
</dbReference>
<dbReference type="GO" id="GO:0009099">
    <property type="term" value="P:L-valine biosynthetic process"/>
    <property type="evidence" value="ECO:0007669"/>
    <property type="project" value="UniProtKB-UniRule"/>
</dbReference>
<dbReference type="FunFam" id="3.50.30.80:FF:000001">
    <property type="entry name" value="Dihydroxy-acid dehydratase"/>
    <property type="match status" value="1"/>
</dbReference>
<dbReference type="Gene3D" id="3.50.30.80">
    <property type="entry name" value="IlvD/EDD C-terminal domain-like"/>
    <property type="match status" value="1"/>
</dbReference>
<dbReference type="HAMAP" id="MF_00012">
    <property type="entry name" value="IlvD"/>
    <property type="match status" value="1"/>
</dbReference>
<dbReference type="InterPro" id="IPR042096">
    <property type="entry name" value="Dihydro-acid_dehy_C"/>
</dbReference>
<dbReference type="InterPro" id="IPR004404">
    <property type="entry name" value="DihydroxyA_deHydtase"/>
</dbReference>
<dbReference type="InterPro" id="IPR020558">
    <property type="entry name" value="DiOHA_6PGluconate_deHydtase_CS"/>
</dbReference>
<dbReference type="InterPro" id="IPR056740">
    <property type="entry name" value="ILV_EDD_C"/>
</dbReference>
<dbReference type="InterPro" id="IPR000581">
    <property type="entry name" value="ILV_EDD_N"/>
</dbReference>
<dbReference type="InterPro" id="IPR037237">
    <property type="entry name" value="IlvD/EDD_N"/>
</dbReference>
<dbReference type="NCBIfam" id="TIGR00110">
    <property type="entry name" value="ilvD"/>
    <property type="match status" value="1"/>
</dbReference>
<dbReference type="NCBIfam" id="NF009103">
    <property type="entry name" value="PRK12448.1"/>
    <property type="match status" value="1"/>
</dbReference>
<dbReference type="PANTHER" id="PTHR43661">
    <property type="entry name" value="D-XYLONATE DEHYDRATASE"/>
    <property type="match status" value="1"/>
</dbReference>
<dbReference type="PANTHER" id="PTHR43661:SF3">
    <property type="entry name" value="D-XYLONATE DEHYDRATASE YAGF-RELATED"/>
    <property type="match status" value="1"/>
</dbReference>
<dbReference type="Pfam" id="PF24877">
    <property type="entry name" value="ILV_EDD_C"/>
    <property type="match status" value="1"/>
</dbReference>
<dbReference type="Pfam" id="PF00920">
    <property type="entry name" value="ILVD_EDD_N"/>
    <property type="match status" value="1"/>
</dbReference>
<dbReference type="SUPFAM" id="SSF143975">
    <property type="entry name" value="IlvD/EDD N-terminal domain-like"/>
    <property type="match status" value="1"/>
</dbReference>
<dbReference type="SUPFAM" id="SSF52016">
    <property type="entry name" value="LeuD/IlvD-like"/>
    <property type="match status" value="1"/>
</dbReference>
<dbReference type="PROSITE" id="PS00886">
    <property type="entry name" value="ILVD_EDD_1"/>
    <property type="match status" value="1"/>
</dbReference>
<dbReference type="PROSITE" id="PS00887">
    <property type="entry name" value="ILVD_EDD_2"/>
    <property type="match status" value="1"/>
</dbReference>
<proteinExistence type="inferred from homology"/>
<keyword id="KW-0001">2Fe-2S</keyword>
<keyword id="KW-0028">Amino-acid biosynthesis</keyword>
<keyword id="KW-0100">Branched-chain amino acid biosynthesis</keyword>
<keyword id="KW-0408">Iron</keyword>
<keyword id="KW-0411">Iron-sulfur</keyword>
<keyword id="KW-0456">Lyase</keyword>
<keyword id="KW-0460">Magnesium</keyword>
<keyword id="KW-0479">Metal-binding</keyword>
<keyword id="KW-1185">Reference proteome</keyword>